<reference key="1">
    <citation type="journal article" date="2001" name="J. Bacteriol.">
        <title>Genome of the bacterium Streptococcus pneumoniae strain R6.</title>
        <authorList>
            <person name="Hoskins J."/>
            <person name="Alborn W.E. Jr."/>
            <person name="Arnold J."/>
            <person name="Blaszczak L.C."/>
            <person name="Burgett S."/>
            <person name="DeHoff B.S."/>
            <person name="Estrem S.T."/>
            <person name="Fritz L."/>
            <person name="Fu D.-J."/>
            <person name="Fuller W."/>
            <person name="Geringer C."/>
            <person name="Gilmour R."/>
            <person name="Glass J.S."/>
            <person name="Khoja H."/>
            <person name="Kraft A.R."/>
            <person name="Lagace R.E."/>
            <person name="LeBlanc D.J."/>
            <person name="Lee L.N."/>
            <person name="Lefkowitz E.J."/>
            <person name="Lu J."/>
            <person name="Matsushima P."/>
            <person name="McAhren S.M."/>
            <person name="McHenney M."/>
            <person name="McLeaster K."/>
            <person name="Mundy C.W."/>
            <person name="Nicas T.I."/>
            <person name="Norris F.H."/>
            <person name="O'Gara M."/>
            <person name="Peery R.B."/>
            <person name="Robertson G.T."/>
            <person name="Rockey P."/>
            <person name="Sun P.-M."/>
            <person name="Winkler M.E."/>
            <person name="Yang Y."/>
            <person name="Young-Bellido M."/>
            <person name="Zhao G."/>
            <person name="Zook C.A."/>
            <person name="Baltz R.H."/>
            <person name="Jaskunas S.R."/>
            <person name="Rosteck P.R. Jr."/>
            <person name="Skatrud P.L."/>
            <person name="Glass J.I."/>
        </authorList>
    </citation>
    <scope>NUCLEOTIDE SEQUENCE [LARGE SCALE GENOMIC DNA]</scope>
    <source>
        <strain>ATCC BAA-255 / R6</strain>
    </source>
</reference>
<proteinExistence type="inferred from homology"/>
<protein>
    <recommendedName>
        <fullName evidence="1">4-hydroxy-tetrahydrodipicolinate reductase</fullName>
        <shortName evidence="1">HTPA reductase</shortName>
        <ecNumber evidence="1">1.17.1.8</ecNumber>
    </recommendedName>
</protein>
<gene>
    <name evidence="1" type="primary">dapB</name>
    <name type="ordered locus">spr1414</name>
</gene>
<sequence>MSIRVIIAGFKGKMGQAACQMVLTDPDLDLVAVLDPFESESEWQGIPVFKDKADLAGFEADVWVDFTTPAVAYENTRFALENGFAPVVGTTGFTSEEIAELKEFSRAQDLGGLIAPNFALGAVLLMQFATQAAKYFPNVEIIELHHDKKKDAPSGTAIKTAELMAEVRESIQQGAADEEELIAGARGADFDGMRIHSVRLPGLVAHQEVIFGNQGEGLTLRHDSYDRISFMTGVNLGIKEVVKRHELVYGLEHLL</sequence>
<feature type="chain" id="PRO_0000141498" description="4-hydroxy-tetrahydrodipicolinate reductase">
    <location>
        <begin position="1"/>
        <end position="255"/>
    </location>
</feature>
<feature type="active site" description="Proton donor/acceptor" evidence="1">
    <location>
        <position position="145"/>
    </location>
</feature>
<feature type="active site" description="Proton donor" evidence="1">
    <location>
        <position position="149"/>
    </location>
</feature>
<feature type="binding site" evidence="1">
    <location>
        <begin position="9"/>
        <end position="14"/>
    </location>
    <ligand>
        <name>NAD(+)</name>
        <dbReference type="ChEBI" id="CHEBI:57540"/>
    </ligand>
</feature>
<feature type="binding site" evidence="1">
    <location>
        <position position="35"/>
    </location>
    <ligand>
        <name>NAD(+)</name>
        <dbReference type="ChEBI" id="CHEBI:57540"/>
    </ligand>
</feature>
<feature type="binding site" evidence="1">
    <location>
        <begin position="89"/>
        <end position="91"/>
    </location>
    <ligand>
        <name>NAD(+)</name>
        <dbReference type="ChEBI" id="CHEBI:57540"/>
    </ligand>
</feature>
<feature type="binding site" evidence="1">
    <location>
        <begin position="115"/>
        <end position="118"/>
    </location>
    <ligand>
        <name>NAD(+)</name>
        <dbReference type="ChEBI" id="CHEBI:57540"/>
    </ligand>
</feature>
<feature type="binding site" evidence="1">
    <location>
        <position position="146"/>
    </location>
    <ligand>
        <name>(S)-2,3,4,5-tetrahydrodipicolinate</name>
        <dbReference type="ChEBI" id="CHEBI:16845"/>
    </ligand>
</feature>
<feature type="binding site" evidence="1">
    <location>
        <begin position="155"/>
        <end position="156"/>
    </location>
    <ligand>
        <name>(S)-2,3,4,5-tetrahydrodipicolinate</name>
        <dbReference type="ChEBI" id="CHEBI:16845"/>
    </ligand>
</feature>
<comment type="function">
    <text evidence="1">Catalyzes the conversion of 4-hydroxy-tetrahydrodipicolinate (HTPA) to tetrahydrodipicolinate.</text>
</comment>
<comment type="catalytic activity">
    <reaction evidence="1">
        <text>(S)-2,3,4,5-tetrahydrodipicolinate + NAD(+) + H2O = (2S,4S)-4-hydroxy-2,3,4,5-tetrahydrodipicolinate + NADH + H(+)</text>
        <dbReference type="Rhea" id="RHEA:35323"/>
        <dbReference type="ChEBI" id="CHEBI:15377"/>
        <dbReference type="ChEBI" id="CHEBI:15378"/>
        <dbReference type="ChEBI" id="CHEBI:16845"/>
        <dbReference type="ChEBI" id="CHEBI:57540"/>
        <dbReference type="ChEBI" id="CHEBI:57945"/>
        <dbReference type="ChEBI" id="CHEBI:67139"/>
        <dbReference type="EC" id="1.17.1.8"/>
    </reaction>
</comment>
<comment type="catalytic activity">
    <reaction evidence="1">
        <text>(S)-2,3,4,5-tetrahydrodipicolinate + NADP(+) + H2O = (2S,4S)-4-hydroxy-2,3,4,5-tetrahydrodipicolinate + NADPH + H(+)</text>
        <dbReference type="Rhea" id="RHEA:35331"/>
        <dbReference type="ChEBI" id="CHEBI:15377"/>
        <dbReference type="ChEBI" id="CHEBI:15378"/>
        <dbReference type="ChEBI" id="CHEBI:16845"/>
        <dbReference type="ChEBI" id="CHEBI:57783"/>
        <dbReference type="ChEBI" id="CHEBI:58349"/>
        <dbReference type="ChEBI" id="CHEBI:67139"/>
        <dbReference type="EC" id="1.17.1.8"/>
    </reaction>
</comment>
<comment type="pathway">
    <text evidence="1">Amino-acid biosynthesis; L-lysine biosynthesis via DAP pathway; (S)-tetrahydrodipicolinate from L-aspartate: step 4/4.</text>
</comment>
<comment type="subcellular location">
    <subcellularLocation>
        <location evidence="1">Cytoplasm</location>
    </subcellularLocation>
</comment>
<comment type="similarity">
    <text evidence="1">Belongs to the DapB family.</text>
</comment>
<comment type="caution">
    <text evidence="2">Was originally thought to be a dihydrodipicolinate reductase (DHDPR), catalyzing the conversion of dihydrodipicolinate to tetrahydrodipicolinate. However, it was shown in E.coli that the substrate of the enzymatic reaction is not dihydrodipicolinate (DHDP) but in fact (2S,4S)-4-hydroxy-2,3,4,5-tetrahydrodipicolinic acid (HTPA), the product released by the DapA-catalyzed reaction.</text>
</comment>
<keyword id="KW-0028">Amino-acid biosynthesis</keyword>
<keyword id="KW-0963">Cytoplasm</keyword>
<keyword id="KW-0220">Diaminopimelate biosynthesis</keyword>
<keyword id="KW-0457">Lysine biosynthesis</keyword>
<keyword id="KW-0520">NAD</keyword>
<keyword id="KW-0521">NADP</keyword>
<keyword id="KW-0560">Oxidoreductase</keyword>
<keyword id="KW-1185">Reference proteome</keyword>
<organism>
    <name type="scientific">Streptococcus pneumoniae (strain ATCC BAA-255 / R6)</name>
    <dbReference type="NCBI Taxonomy" id="171101"/>
    <lineage>
        <taxon>Bacteria</taxon>
        <taxon>Bacillati</taxon>
        <taxon>Bacillota</taxon>
        <taxon>Bacilli</taxon>
        <taxon>Lactobacillales</taxon>
        <taxon>Streptococcaceae</taxon>
        <taxon>Streptococcus</taxon>
    </lineage>
</organism>
<dbReference type="EC" id="1.17.1.8" evidence="1"/>
<dbReference type="EMBL" id="AE007317">
    <property type="protein sequence ID" value="AAL00218.1"/>
    <property type="molecule type" value="Genomic_DNA"/>
</dbReference>
<dbReference type="PIR" id="E98048">
    <property type="entry name" value="E98048"/>
</dbReference>
<dbReference type="RefSeq" id="NP_359007.1">
    <property type="nucleotide sequence ID" value="NC_003098.1"/>
</dbReference>
<dbReference type="RefSeq" id="WP_000027902.1">
    <property type="nucleotide sequence ID" value="NC_003098.1"/>
</dbReference>
<dbReference type="SMR" id="P63896"/>
<dbReference type="STRING" id="171101.spr1414"/>
<dbReference type="KEGG" id="spr:spr1414"/>
<dbReference type="PATRIC" id="fig|171101.6.peg.1530"/>
<dbReference type="eggNOG" id="COG0289">
    <property type="taxonomic scope" value="Bacteria"/>
</dbReference>
<dbReference type="HOGENOM" id="CLU_047479_0_1_9"/>
<dbReference type="UniPathway" id="UPA00034">
    <property type="reaction ID" value="UER00018"/>
</dbReference>
<dbReference type="Proteomes" id="UP000000586">
    <property type="component" value="Chromosome"/>
</dbReference>
<dbReference type="GO" id="GO:0005829">
    <property type="term" value="C:cytosol"/>
    <property type="evidence" value="ECO:0000318"/>
    <property type="project" value="GO_Central"/>
</dbReference>
<dbReference type="GO" id="GO:0008839">
    <property type="term" value="F:4-hydroxy-tetrahydrodipicolinate reductase"/>
    <property type="evidence" value="ECO:0000318"/>
    <property type="project" value="GO_Central"/>
</dbReference>
<dbReference type="GO" id="GO:0051287">
    <property type="term" value="F:NAD binding"/>
    <property type="evidence" value="ECO:0007669"/>
    <property type="project" value="UniProtKB-UniRule"/>
</dbReference>
<dbReference type="GO" id="GO:0050661">
    <property type="term" value="F:NADP binding"/>
    <property type="evidence" value="ECO:0007669"/>
    <property type="project" value="UniProtKB-UniRule"/>
</dbReference>
<dbReference type="GO" id="GO:0016726">
    <property type="term" value="F:oxidoreductase activity, acting on CH or CH2 groups, NAD or NADP as acceptor"/>
    <property type="evidence" value="ECO:0007669"/>
    <property type="project" value="UniProtKB-UniRule"/>
</dbReference>
<dbReference type="GO" id="GO:0019877">
    <property type="term" value="P:diaminopimelate biosynthetic process"/>
    <property type="evidence" value="ECO:0000318"/>
    <property type="project" value="GO_Central"/>
</dbReference>
<dbReference type="GO" id="GO:0009089">
    <property type="term" value="P:lysine biosynthetic process via diaminopimelate"/>
    <property type="evidence" value="ECO:0007669"/>
    <property type="project" value="UniProtKB-UniRule"/>
</dbReference>
<dbReference type="CDD" id="cd02274">
    <property type="entry name" value="DHDPR_N"/>
    <property type="match status" value="1"/>
</dbReference>
<dbReference type="FunFam" id="3.30.360.10:FF:000009">
    <property type="entry name" value="4-hydroxy-tetrahydrodipicolinate reductase"/>
    <property type="match status" value="1"/>
</dbReference>
<dbReference type="Gene3D" id="3.30.360.10">
    <property type="entry name" value="Dihydrodipicolinate Reductase, domain 2"/>
    <property type="match status" value="1"/>
</dbReference>
<dbReference type="Gene3D" id="3.40.50.720">
    <property type="entry name" value="NAD(P)-binding Rossmann-like Domain"/>
    <property type="match status" value="1"/>
</dbReference>
<dbReference type="HAMAP" id="MF_00102">
    <property type="entry name" value="DapB"/>
    <property type="match status" value="1"/>
</dbReference>
<dbReference type="InterPro" id="IPR022663">
    <property type="entry name" value="DapB_C"/>
</dbReference>
<dbReference type="InterPro" id="IPR000846">
    <property type="entry name" value="DapB_N"/>
</dbReference>
<dbReference type="InterPro" id="IPR022664">
    <property type="entry name" value="DapB_N_CS"/>
</dbReference>
<dbReference type="InterPro" id="IPR023940">
    <property type="entry name" value="DHDPR_bac"/>
</dbReference>
<dbReference type="InterPro" id="IPR036291">
    <property type="entry name" value="NAD(P)-bd_dom_sf"/>
</dbReference>
<dbReference type="NCBIfam" id="TIGR00036">
    <property type="entry name" value="dapB"/>
    <property type="match status" value="1"/>
</dbReference>
<dbReference type="PANTHER" id="PTHR20836:SF0">
    <property type="entry name" value="4-HYDROXY-TETRAHYDRODIPICOLINATE REDUCTASE 1, CHLOROPLASTIC-RELATED"/>
    <property type="match status" value="1"/>
</dbReference>
<dbReference type="PANTHER" id="PTHR20836">
    <property type="entry name" value="DIHYDRODIPICOLINATE REDUCTASE"/>
    <property type="match status" value="1"/>
</dbReference>
<dbReference type="Pfam" id="PF05173">
    <property type="entry name" value="DapB_C"/>
    <property type="match status" value="1"/>
</dbReference>
<dbReference type="Pfam" id="PF01113">
    <property type="entry name" value="DapB_N"/>
    <property type="match status" value="1"/>
</dbReference>
<dbReference type="PIRSF" id="PIRSF000161">
    <property type="entry name" value="DHPR"/>
    <property type="match status" value="1"/>
</dbReference>
<dbReference type="SUPFAM" id="SSF55347">
    <property type="entry name" value="Glyceraldehyde-3-phosphate dehydrogenase-like, C-terminal domain"/>
    <property type="match status" value="1"/>
</dbReference>
<dbReference type="SUPFAM" id="SSF51735">
    <property type="entry name" value="NAD(P)-binding Rossmann-fold domains"/>
    <property type="match status" value="1"/>
</dbReference>
<dbReference type="PROSITE" id="PS01298">
    <property type="entry name" value="DAPB"/>
    <property type="match status" value="1"/>
</dbReference>
<evidence type="ECO:0000255" key="1">
    <source>
        <dbReference type="HAMAP-Rule" id="MF_00102"/>
    </source>
</evidence>
<evidence type="ECO:0000305" key="2"/>
<name>DAPB_STRR6</name>
<accession>P63896</accession>
<accession>Q97PP8</accession>